<dbReference type="EMBL" id="CP000038">
    <property type="protein sequence ID" value="AAZ88648.1"/>
    <property type="molecule type" value="Genomic_DNA"/>
</dbReference>
<dbReference type="RefSeq" id="WP_001015013.1">
    <property type="nucleotide sequence ID" value="NC_007384.1"/>
</dbReference>
<dbReference type="SMR" id="Q3Z0R4"/>
<dbReference type="GeneID" id="93775263"/>
<dbReference type="KEGG" id="ssn:SSON_1982"/>
<dbReference type="HOGENOM" id="CLU_155793_1_1_6"/>
<dbReference type="Proteomes" id="UP000002529">
    <property type="component" value="Chromosome"/>
</dbReference>
<dbReference type="GO" id="GO:0005829">
    <property type="term" value="C:cytosol"/>
    <property type="evidence" value="ECO:0007669"/>
    <property type="project" value="UniProtKB-SubCell"/>
</dbReference>
<dbReference type="GO" id="GO:0044781">
    <property type="term" value="P:bacterial-type flagellum organization"/>
    <property type="evidence" value="ECO:0007669"/>
    <property type="project" value="UniProtKB-KW"/>
</dbReference>
<dbReference type="GO" id="GO:1902209">
    <property type="term" value="P:negative regulation of bacterial-type flagellum assembly"/>
    <property type="evidence" value="ECO:0007669"/>
    <property type="project" value="UniProtKB-UniRule"/>
</dbReference>
<dbReference type="GO" id="GO:0006457">
    <property type="term" value="P:protein folding"/>
    <property type="evidence" value="ECO:0007669"/>
    <property type="project" value="UniProtKB-UniRule"/>
</dbReference>
<dbReference type="FunFam" id="1.20.58.380:FF:000001">
    <property type="entry name" value="Flagellar protein FliT"/>
    <property type="match status" value="1"/>
</dbReference>
<dbReference type="Gene3D" id="1.20.58.380">
    <property type="entry name" value="Flagellar protein flit"/>
    <property type="match status" value="1"/>
</dbReference>
<dbReference type="HAMAP" id="MF_01180">
    <property type="entry name" value="FliT"/>
    <property type="match status" value="1"/>
</dbReference>
<dbReference type="InterPro" id="IPR008622">
    <property type="entry name" value="FliT"/>
</dbReference>
<dbReference type="NCBIfam" id="NF007836">
    <property type="entry name" value="PRK10548.1"/>
    <property type="match status" value="1"/>
</dbReference>
<dbReference type="Pfam" id="PF05400">
    <property type="entry name" value="FliT"/>
    <property type="match status" value="1"/>
</dbReference>
<evidence type="ECO:0000255" key="1">
    <source>
        <dbReference type="HAMAP-Rule" id="MF_01180"/>
    </source>
</evidence>
<proteinExistence type="inferred from homology"/>
<keyword id="KW-1005">Bacterial flagellum biogenesis</keyword>
<keyword id="KW-0143">Chaperone</keyword>
<keyword id="KW-0963">Cytoplasm</keyword>
<keyword id="KW-1185">Reference proteome</keyword>
<keyword id="KW-0678">Repressor</keyword>
<keyword id="KW-0804">Transcription</keyword>
<keyword id="KW-0805">Transcription regulation</keyword>
<organism>
    <name type="scientific">Shigella sonnei (strain Ss046)</name>
    <dbReference type="NCBI Taxonomy" id="300269"/>
    <lineage>
        <taxon>Bacteria</taxon>
        <taxon>Pseudomonadati</taxon>
        <taxon>Pseudomonadota</taxon>
        <taxon>Gammaproteobacteria</taxon>
        <taxon>Enterobacterales</taxon>
        <taxon>Enterobacteriaceae</taxon>
        <taxon>Shigella</taxon>
    </lineage>
</organism>
<comment type="function">
    <text evidence="1">Dual-function protein that regulates the transcription of class 2 flagellar operons and that also acts as an export chaperone for the filament-capping protein FliD. As a transcriptional regulator, acts as an anti-FlhDC factor; it directly binds FlhC, thus inhibiting the binding of the FlhC/FlhD complex to class 2 promoters, resulting in decreased expression of class 2 flagellar operons. As a chaperone, effects FliD transition to the membrane by preventing its premature polymerization, and by directing it to the export apparatus.</text>
</comment>
<comment type="subunit">
    <text evidence="1">Homodimer. Interacts with FliD and FlhC.</text>
</comment>
<comment type="subcellular location">
    <subcellularLocation>
        <location evidence="1">Cytoplasm</location>
        <location evidence="1">Cytosol</location>
    </subcellularLocation>
</comment>
<comment type="similarity">
    <text evidence="1">Belongs to the FliT family.</text>
</comment>
<reference key="1">
    <citation type="journal article" date="2005" name="Nucleic Acids Res.">
        <title>Genome dynamics and diversity of Shigella species, the etiologic agents of bacillary dysentery.</title>
        <authorList>
            <person name="Yang F."/>
            <person name="Yang J."/>
            <person name="Zhang X."/>
            <person name="Chen L."/>
            <person name="Jiang Y."/>
            <person name="Yan Y."/>
            <person name="Tang X."/>
            <person name="Wang J."/>
            <person name="Xiong Z."/>
            <person name="Dong J."/>
            <person name="Xue Y."/>
            <person name="Zhu Y."/>
            <person name="Xu X."/>
            <person name="Sun L."/>
            <person name="Chen S."/>
            <person name="Nie H."/>
            <person name="Peng J."/>
            <person name="Xu J."/>
            <person name="Wang Y."/>
            <person name="Yuan Z."/>
            <person name="Wen Y."/>
            <person name="Yao Z."/>
            <person name="Shen Y."/>
            <person name="Qiang B."/>
            <person name="Hou Y."/>
            <person name="Yu J."/>
            <person name="Jin Q."/>
        </authorList>
    </citation>
    <scope>NUCLEOTIDE SEQUENCE [LARGE SCALE GENOMIC DNA]</scope>
    <source>
        <strain>Ss046</strain>
    </source>
</reference>
<protein>
    <recommendedName>
        <fullName evidence="1">Flagellar protein FliT</fullName>
    </recommendedName>
</protein>
<name>FLIT_SHISS</name>
<feature type="chain" id="PRO_0000353894" description="Flagellar protein FliT">
    <location>
        <begin position="1"/>
        <end position="121"/>
    </location>
</feature>
<feature type="region of interest" description="Required for homodimerization" evidence="1">
    <location>
        <begin position="1"/>
        <end position="50"/>
    </location>
</feature>
<feature type="region of interest" description="FliD binding" evidence="1">
    <location>
        <begin position="60"/>
        <end position="98"/>
    </location>
</feature>
<accession>Q3Z0R4</accession>
<sequence>MNHAPHLYFAWQQLVDKSQLMLRLATEEQWDELIASEMAYVNAVQEIAHLTEEVAPSTTMQEQLRPMLRLILDNESKVKQLLQIRMDELAKLVGQSSVQKSVLSAYGDQGGFVLAPQDNLF</sequence>
<gene>
    <name evidence="1" type="primary">fliT</name>
    <name type="ordered locus">SSON_1982</name>
</gene>